<feature type="chain" id="PRO_1000060021" description="Chromosomal replication initiator protein DnaA">
    <location>
        <begin position="1"/>
        <end position="462"/>
    </location>
</feature>
<feature type="region of interest" description="Domain I, interacts with DnaA modulators" evidence="1">
    <location>
        <begin position="1"/>
        <end position="80"/>
    </location>
</feature>
<feature type="region of interest" description="Domain II" evidence="1">
    <location>
        <begin position="80"/>
        <end position="121"/>
    </location>
</feature>
<feature type="region of interest" description="Domain III, AAA+ region" evidence="1">
    <location>
        <begin position="122"/>
        <end position="338"/>
    </location>
</feature>
<feature type="region of interest" description="Domain IV, binds dsDNA" evidence="1">
    <location>
        <begin position="339"/>
        <end position="462"/>
    </location>
</feature>
<feature type="binding site" evidence="1">
    <location>
        <position position="166"/>
    </location>
    <ligand>
        <name>ATP</name>
        <dbReference type="ChEBI" id="CHEBI:30616"/>
    </ligand>
</feature>
<feature type="binding site" evidence="1">
    <location>
        <position position="168"/>
    </location>
    <ligand>
        <name>ATP</name>
        <dbReference type="ChEBI" id="CHEBI:30616"/>
    </ligand>
</feature>
<feature type="binding site" evidence="1">
    <location>
        <position position="169"/>
    </location>
    <ligand>
        <name>ATP</name>
        <dbReference type="ChEBI" id="CHEBI:30616"/>
    </ligand>
</feature>
<feature type="binding site" evidence="1">
    <location>
        <position position="170"/>
    </location>
    <ligand>
        <name>ATP</name>
        <dbReference type="ChEBI" id="CHEBI:30616"/>
    </ligand>
</feature>
<keyword id="KW-0067">ATP-binding</keyword>
<keyword id="KW-0963">Cytoplasm</keyword>
<keyword id="KW-0235">DNA replication</keyword>
<keyword id="KW-0238">DNA-binding</keyword>
<keyword id="KW-0446">Lipid-binding</keyword>
<keyword id="KW-0547">Nucleotide-binding</keyword>
<keyword id="KW-1185">Reference proteome</keyword>
<reference key="1">
    <citation type="submission" date="2005-08" db="EMBL/GenBank/DDBJ databases">
        <title>Complete sequence of Synechococcus sp. CC9902.</title>
        <authorList>
            <person name="Copeland A."/>
            <person name="Lucas S."/>
            <person name="Lapidus A."/>
            <person name="Barry K."/>
            <person name="Detter J.C."/>
            <person name="Glavina T."/>
            <person name="Hammon N."/>
            <person name="Israni S."/>
            <person name="Pitluck S."/>
            <person name="Martinez M."/>
            <person name="Schmutz J."/>
            <person name="Larimer F."/>
            <person name="Land M."/>
            <person name="Kyrpides N."/>
            <person name="Ivanova N."/>
            <person name="Richardson P."/>
        </authorList>
    </citation>
    <scope>NUCLEOTIDE SEQUENCE [LARGE SCALE GENOMIC DNA]</scope>
    <source>
        <strain>CC9902</strain>
    </source>
</reference>
<name>DNAA_SYNS9</name>
<gene>
    <name evidence="1" type="primary">dnaA</name>
    <name type="ordered locus">Syncc9902_0886</name>
</gene>
<organism>
    <name type="scientific">Synechococcus sp. (strain CC9902)</name>
    <dbReference type="NCBI Taxonomy" id="316279"/>
    <lineage>
        <taxon>Bacteria</taxon>
        <taxon>Bacillati</taxon>
        <taxon>Cyanobacteriota</taxon>
        <taxon>Cyanophyceae</taxon>
        <taxon>Synechococcales</taxon>
        <taxon>Synechococcaceae</taxon>
        <taxon>Synechococcus</taxon>
    </lineage>
</organism>
<evidence type="ECO:0000255" key="1">
    <source>
        <dbReference type="HAMAP-Rule" id="MF_00377"/>
    </source>
</evidence>
<sequence>METGDELWTKVRKGLQDKLSKPTFETFIRPTGCSSFSNGELKLLAPNPFTSIRLREQLLPTIAEMATSISGRSVQVTVLAETALPKSEFVADAAAVELTDVSEPRRESAPARPSGQRRYLPALNPRYVFGRFVVGQNSRMAHAAALAVAEAPGREFNPLFICGGVGLGKTHLMQAIGHYRLEIDPGARVAYVSTETFTNDLIQAIRKDGMQAFRDRYRAADLILVDDIQFIEGKEYTQEEFFHTFNALHEAGRQVVIASDRPPSQIPRLQQRLISRFQMGLIADIQSPDLETRMAILQKKAEQERMALPRDLIQYIAGRFTSNIRELEGALTRAVAFASITGLPMTVESVAPMLDPTGQGVAVSPQQVIEKVSEVFDVTAEEMCSSTRRRAVSQARQVGMYLMRQGTDLSLPRIGDTFGGKDHTTVMYAIEQIEKKLASDPKLAGQVQKVRDLLQIDSRSKR</sequence>
<protein>
    <recommendedName>
        <fullName evidence="1">Chromosomal replication initiator protein DnaA</fullName>
    </recommendedName>
</protein>
<comment type="function">
    <text evidence="1">Plays an essential role in the initiation and regulation of chromosomal replication. ATP-DnaA binds to the origin of replication (oriC) to initiate formation of the DNA replication initiation complex once per cell cycle. Binds the DnaA box (a 9 base pair repeat at the origin) and separates the double-stranded (ds)DNA. Forms a right-handed helical filament on oriC DNA; dsDNA binds to the exterior of the filament while single-stranded (ss)DNA is stabiized in the filament's interior. The ATP-DnaA-oriC complex binds and stabilizes one strand of the AT-rich DNA unwinding element (DUE), permitting loading of DNA polymerase. After initiation quickly degrades to an ADP-DnaA complex that is not apt for DNA replication. Binds acidic phospholipids.</text>
</comment>
<comment type="subunit">
    <text evidence="1">Oligomerizes as a right-handed, spiral filament on DNA at oriC.</text>
</comment>
<comment type="subcellular location">
    <subcellularLocation>
        <location evidence="1">Cytoplasm</location>
    </subcellularLocation>
</comment>
<comment type="domain">
    <text evidence="1">Domain I is involved in oligomerization and binding regulators, domain II is flexibile and of varying length in different bacteria, domain III forms the AAA+ region, while domain IV binds dsDNA.</text>
</comment>
<comment type="similarity">
    <text evidence="1">Belongs to the DnaA family.</text>
</comment>
<dbReference type="EMBL" id="CP000097">
    <property type="protein sequence ID" value="ABB25852.1"/>
    <property type="molecule type" value="Genomic_DNA"/>
</dbReference>
<dbReference type="SMR" id="Q3AYH5"/>
<dbReference type="STRING" id="316279.Syncc9902_0886"/>
<dbReference type="KEGG" id="sye:Syncc9902_0886"/>
<dbReference type="eggNOG" id="COG0593">
    <property type="taxonomic scope" value="Bacteria"/>
</dbReference>
<dbReference type="HOGENOM" id="CLU_026910_3_1_3"/>
<dbReference type="Proteomes" id="UP000002712">
    <property type="component" value="Chromosome"/>
</dbReference>
<dbReference type="GO" id="GO:0005737">
    <property type="term" value="C:cytoplasm"/>
    <property type="evidence" value="ECO:0007669"/>
    <property type="project" value="UniProtKB-SubCell"/>
</dbReference>
<dbReference type="GO" id="GO:0005886">
    <property type="term" value="C:plasma membrane"/>
    <property type="evidence" value="ECO:0007669"/>
    <property type="project" value="TreeGrafter"/>
</dbReference>
<dbReference type="GO" id="GO:0005524">
    <property type="term" value="F:ATP binding"/>
    <property type="evidence" value="ECO:0007669"/>
    <property type="project" value="UniProtKB-UniRule"/>
</dbReference>
<dbReference type="GO" id="GO:0016887">
    <property type="term" value="F:ATP hydrolysis activity"/>
    <property type="evidence" value="ECO:0007669"/>
    <property type="project" value="InterPro"/>
</dbReference>
<dbReference type="GO" id="GO:0003688">
    <property type="term" value="F:DNA replication origin binding"/>
    <property type="evidence" value="ECO:0007669"/>
    <property type="project" value="UniProtKB-UniRule"/>
</dbReference>
<dbReference type="GO" id="GO:0008289">
    <property type="term" value="F:lipid binding"/>
    <property type="evidence" value="ECO:0007669"/>
    <property type="project" value="UniProtKB-KW"/>
</dbReference>
<dbReference type="GO" id="GO:0006270">
    <property type="term" value="P:DNA replication initiation"/>
    <property type="evidence" value="ECO:0007669"/>
    <property type="project" value="UniProtKB-UniRule"/>
</dbReference>
<dbReference type="GO" id="GO:0006275">
    <property type="term" value="P:regulation of DNA replication"/>
    <property type="evidence" value="ECO:0007669"/>
    <property type="project" value="UniProtKB-UniRule"/>
</dbReference>
<dbReference type="CDD" id="cd00009">
    <property type="entry name" value="AAA"/>
    <property type="match status" value="1"/>
</dbReference>
<dbReference type="CDD" id="cd06571">
    <property type="entry name" value="Bac_DnaA_C"/>
    <property type="match status" value="1"/>
</dbReference>
<dbReference type="FunFam" id="3.40.50.300:FF:000668">
    <property type="entry name" value="Chromosomal replication initiator protein DnaA"/>
    <property type="match status" value="1"/>
</dbReference>
<dbReference type="Gene3D" id="1.10.1750.10">
    <property type="match status" value="1"/>
</dbReference>
<dbReference type="Gene3D" id="1.10.8.60">
    <property type="match status" value="1"/>
</dbReference>
<dbReference type="Gene3D" id="3.30.300.180">
    <property type="match status" value="1"/>
</dbReference>
<dbReference type="Gene3D" id="3.40.50.300">
    <property type="entry name" value="P-loop containing nucleotide triphosphate hydrolases"/>
    <property type="match status" value="1"/>
</dbReference>
<dbReference type="HAMAP" id="MF_00377">
    <property type="entry name" value="DnaA_bact"/>
    <property type="match status" value="1"/>
</dbReference>
<dbReference type="InterPro" id="IPR003593">
    <property type="entry name" value="AAA+_ATPase"/>
</dbReference>
<dbReference type="InterPro" id="IPR001957">
    <property type="entry name" value="Chromosome_initiator_DnaA"/>
</dbReference>
<dbReference type="InterPro" id="IPR020591">
    <property type="entry name" value="Chromosome_initiator_DnaA-like"/>
</dbReference>
<dbReference type="InterPro" id="IPR018312">
    <property type="entry name" value="Chromosome_initiator_DnaA_CS"/>
</dbReference>
<dbReference type="InterPro" id="IPR013159">
    <property type="entry name" value="DnaA_C"/>
</dbReference>
<dbReference type="InterPro" id="IPR013317">
    <property type="entry name" value="DnaA_dom"/>
</dbReference>
<dbReference type="InterPro" id="IPR024633">
    <property type="entry name" value="DnaA_N_dom"/>
</dbReference>
<dbReference type="InterPro" id="IPR038454">
    <property type="entry name" value="DnaA_N_sf"/>
</dbReference>
<dbReference type="InterPro" id="IPR027417">
    <property type="entry name" value="P-loop_NTPase"/>
</dbReference>
<dbReference type="InterPro" id="IPR010921">
    <property type="entry name" value="Trp_repressor/repl_initiator"/>
</dbReference>
<dbReference type="NCBIfam" id="TIGR00362">
    <property type="entry name" value="DnaA"/>
    <property type="match status" value="1"/>
</dbReference>
<dbReference type="PANTHER" id="PTHR30050">
    <property type="entry name" value="CHROMOSOMAL REPLICATION INITIATOR PROTEIN DNAA"/>
    <property type="match status" value="1"/>
</dbReference>
<dbReference type="PANTHER" id="PTHR30050:SF2">
    <property type="entry name" value="CHROMOSOMAL REPLICATION INITIATOR PROTEIN DNAA"/>
    <property type="match status" value="1"/>
</dbReference>
<dbReference type="Pfam" id="PF00308">
    <property type="entry name" value="Bac_DnaA"/>
    <property type="match status" value="1"/>
</dbReference>
<dbReference type="Pfam" id="PF08299">
    <property type="entry name" value="Bac_DnaA_C"/>
    <property type="match status" value="1"/>
</dbReference>
<dbReference type="Pfam" id="PF11638">
    <property type="entry name" value="DnaA_N"/>
    <property type="match status" value="1"/>
</dbReference>
<dbReference type="PRINTS" id="PR00051">
    <property type="entry name" value="DNAA"/>
</dbReference>
<dbReference type="SMART" id="SM00382">
    <property type="entry name" value="AAA"/>
    <property type="match status" value="1"/>
</dbReference>
<dbReference type="SMART" id="SM00760">
    <property type="entry name" value="Bac_DnaA_C"/>
    <property type="match status" value="1"/>
</dbReference>
<dbReference type="SUPFAM" id="SSF52540">
    <property type="entry name" value="P-loop containing nucleoside triphosphate hydrolases"/>
    <property type="match status" value="1"/>
</dbReference>
<dbReference type="SUPFAM" id="SSF48295">
    <property type="entry name" value="TrpR-like"/>
    <property type="match status" value="1"/>
</dbReference>
<dbReference type="PROSITE" id="PS01008">
    <property type="entry name" value="DNAA"/>
    <property type="match status" value="1"/>
</dbReference>
<accession>Q3AYH5</accession>
<proteinExistence type="inferred from homology"/>